<reference key="1">
    <citation type="journal article" date="2004" name="Nucleic Acids Res.">
        <title>Thermoadaptation trait revealed by the genome sequence of thermophilic Geobacillus kaustophilus.</title>
        <authorList>
            <person name="Takami H."/>
            <person name="Takaki Y."/>
            <person name="Chee G.-J."/>
            <person name="Nishi S."/>
            <person name="Shimamura S."/>
            <person name="Suzuki H."/>
            <person name="Matsui S."/>
            <person name="Uchiyama I."/>
        </authorList>
    </citation>
    <scope>NUCLEOTIDE SEQUENCE [LARGE SCALE GENOMIC DNA]</scope>
    <source>
        <strain>HTA426</strain>
    </source>
</reference>
<sequence length="339" mass="35706">MLKQLLSKCAEGKALTEDEAYAAMNIIMSGEATDSQIASLLSMLRLRGETVDELVGFVRAMRDRMTAIEASDDVIDTCGTGGDGAATFNVSTAAAIVISSLGVKVAKHGNRAVSSKSGSADVLERLGIDIQTSPSAAKQALETKGLAFLFAPLYHAAMKHAAGPRKEIGFRTVFNLIGPLANPARCKRQVVGVYSTCYAEKLAEAMRRLGSEHVLFVTGRDGLDECSIAAETDVVELKDGAIRRFVIAPEDAGLPRGELADVQVRDPEESAALLEAVMAGTAPESAINIVALNAGAALYAAGKAETIAEGVAMAKEAILSKTAYEQLQRLRAKEVIHDA</sequence>
<gene>
    <name evidence="1" type="primary">trpD</name>
    <name type="ordered locus">GK2203</name>
</gene>
<keyword id="KW-0028">Amino-acid biosynthesis</keyword>
<keyword id="KW-0057">Aromatic amino acid biosynthesis</keyword>
<keyword id="KW-0328">Glycosyltransferase</keyword>
<keyword id="KW-0460">Magnesium</keyword>
<keyword id="KW-0479">Metal-binding</keyword>
<keyword id="KW-1185">Reference proteome</keyword>
<keyword id="KW-0808">Transferase</keyword>
<keyword id="KW-0822">Tryptophan biosynthesis</keyword>
<dbReference type="EC" id="2.4.2.18" evidence="1"/>
<dbReference type="EMBL" id="BA000043">
    <property type="protein sequence ID" value="BAD76488.1"/>
    <property type="molecule type" value="Genomic_DNA"/>
</dbReference>
<dbReference type="RefSeq" id="WP_011231688.1">
    <property type="nucleotide sequence ID" value="NC_006510.1"/>
</dbReference>
<dbReference type="SMR" id="Q5KXU8"/>
<dbReference type="STRING" id="235909.GK2203"/>
<dbReference type="KEGG" id="gka:GK2203"/>
<dbReference type="PATRIC" id="fig|235909.7.peg.2358"/>
<dbReference type="eggNOG" id="COG0547">
    <property type="taxonomic scope" value="Bacteria"/>
</dbReference>
<dbReference type="HOGENOM" id="CLU_034315_2_1_9"/>
<dbReference type="UniPathway" id="UPA00035">
    <property type="reaction ID" value="UER00041"/>
</dbReference>
<dbReference type="Proteomes" id="UP000001172">
    <property type="component" value="Chromosome"/>
</dbReference>
<dbReference type="GO" id="GO:0005829">
    <property type="term" value="C:cytosol"/>
    <property type="evidence" value="ECO:0007669"/>
    <property type="project" value="TreeGrafter"/>
</dbReference>
<dbReference type="GO" id="GO:0004048">
    <property type="term" value="F:anthranilate phosphoribosyltransferase activity"/>
    <property type="evidence" value="ECO:0007669"/>
    <property type="project" value="UniProtKB-UniRule"/>
</dbReference>
<dbReference type="GO" id="GO:0000287">
    <property type="term" value="F:magnesium ion binding"/>
    <property type="evidence" value="ECO:0007669"/>
    <property type="project" value="UniProtKB-UniRule"/>
</dbReference>
<dbReference type="GO" id="GO:0000162">
    <property type="term" value="P:L-tryptophan biosynthetic process"/>
    <property type="evidence" value="ECO:0007669"/>
    <property type="project" value="UniProtKB-UniRule"/>
</dbReference>
<dbReference type="FunFam" id="3.40.1030.10:FF:000002">
    <property type="entry name" value="Anthranilate phosphoribosyltransferase"/>
    <property type="match status" value="1"/>
</dbReference>
<dbReference type="Gene3D" id="3.40.1030.10">
    <property type="entry name" value="Nucleoside phosphorylase/phosphoribosyltransferase catalytic domain"/>
    <property type="match status" value="1"/>
</dbReference>
<dbReference type="Gene3D" id="1.20.970.10">
    <property type="entry name" value="Transferase, Pyrimidine Nucleoside Phosphorylase, Chain C"/>
    <property type="match status" value="1"/>
</dbReference>
<dbReference type="HAMAP" id="MF_00211">
    <property type="entry name" value="TrpD"/>
    <property type="match status" value="1"/>
</dbReference>
<dbReference type="InterPro" id="IPR005940">
    <property type="entry name" value="Anthranilate_Pribosyl_Tfrase"/>
</dbReference>
<dbReference type="InterPro" id="IPR000312">
    <property type="entry name" value="Glycosyl_Trfase_fam3"/>
</dbReference>
<dbReference type="InterPro" id="IPR017459">
    <property type="entry name" value="Glycosyl_Trfase_fam3_N_dom"/>
</dbReference>
<dbReference type="InterPro" id="IPR036320">
    <property type="entry name" value="Glycosyl_Trfase_fam3_N_dom_sf"/>
</dbReference>
<dbReference type="InterPro" id="IPR035902">
    <property type="entry name" value="Nuc_phospho_transferase"/>
</dbReference>
<dbReference type="NCBIfam" id="TIGR01245">
    <property type="entry name" value="trpD"/>
    <property type="match status" value="1"/>
</dbReference>
<dbReference type="PANTHER" id="PTHR43285">
    <property type="entry name" value="ANTHRANILATE PHOSPHORIBOSYLTRANSFERASE"/>
    <property type="match status" value="1"/>
</dbReference>
<dbReference type="PANTHER" id="PTHR43285:SF2">
    <property type="entry name" value="ANTHRANILATE PHOSPHORIBOSYLTRANSFERASE"/>
    <property type="match status" value="1"/>
</dbReference>
<dbReference type="Pfam" id="PF02885">
    <property type="entry name" value="Glycos_trans_3N"/>
    <property type="match status" value="1"/>
</dbReference>
<dbReference type="Pfam" id="PF00591">
    <property type="entry name" value="Glycos_transf_3"/>
    <property type="match status" value="1"/>
</dbReference>
<dbReference type="SUPFAM" id="SSF52418">
    <property type="entry name" value="Nucleoside phosphorylase/phosphoribosyltransferase catalytic domain"/>
    <property type="match status" value="1"/>
</dbReference>
<dbReference type="SUPFAM" id="SSF47648">
    <property type="entry name" value="Nucleoside phosphorylase/phosphoribosyltransferase N-terminal domain"/>
    <property type="match status" value="1"/>
</dbReference>
<feature type="chain" id="PRO_0000227157" description="Anthranilate phosphoribosyltransferase">
    <location>
        <begin position="1"/>
        <end position="339"/>
    </location>
</feature>
<feature type="binding site" evidence="1">
    <location>
        <position position="79"/>
    </location>
    <ligand>
        <name>5-phospho-alpha-D-ribose 1-diphosphate</name>
        <dbReference type="ChEBI" id="CHEBI:58017"/>
    </ligand>
</feature>
<feature type="binding site" evidence="1">
    <location>
        <position position="79"/>
    </location>
    <ligand>
        <name>anthranilate</name>
        <dbReference type="ChEBI" id="CHEBI:16567"/>
        <label>1</label>
    </ligand>
</feature>
<feature type="binding site" evidence="1">
    <location>
        <begin position="82"/>
        <end position="83"/>
    </location>
    <ligand>
        <name>5-phospho-alpha-D-ribose 1-diphosphate</name>
        <dbReference type="ChEBI" id="CHEBI:58017"/>
    </ligand>
</feature>
<feature type="binding site" evidence="1">
    <location>
        <position position="87"/>
    </location>
    <ligand>
        <name>5-phospho-alpha-D-ribose 1-diphosphate</name>
        <dbReference type="ChEBI" id="CHEBI:58017"/>
    </ligand>
</feature>
<feature type="binding site" evidence="1">
    <location>
        <begin position="89"/>
        <end position="92"/>
    </location>
    <ligand>
        <name>5-phospho-alpha-D-ribose 1-diphosphate</name>
        <dbReference type="ChEBI" id="CHEBI:58017"/>
    </ligand>
</feature>
<feature type="binding site" evidence="1">
    <location>
        <position position="91"/>
    </location>
    <ligand>
        <name>Mg(2+)</name>
        <dbReference type="ChEBI" id="CHEBI:18420"/>
        <label>1</label>
    </ligand>
</feature>
<feature type="binding site" evidence="1">
    <location>
        <begin position="107"/>
        <end position="115"/>
    </location>
    <ligand>
        <name>5-phospho-alpha-D-ribose 1-diphosphate</name>
        <dbReference type="ChEBI" id="CHEBI:58017"/>
    </ligand>
</feature>
<feature type="binding site" evidence="1">
    <location>
        <position position="110"/>
    </location>
    <ligand>
        <name>anthranilate</name>
        <dbReference type="ChEBI" id="CHEBI:16567"/>
        <label>1</label>
    </ligand>
</feature>
<feature type="binding site" evidence="1">
    <location>
        <position position="119"/>
    </location>
    <ligand>
        <name>5-phospho-alpha-D-ribose 1-diphosphate</name>
        <dbReference type="ChEBI" id="CHEBI:58017"/>
    </ligand>
</feature>
<feature type="binding site" evidence="1">
    <location>
        <position position="165"/>
    </location>
    <ligand>
        <name>anthranilate</name>
        <dbReference type="ChEBI" id="CHEBI:16567"/>
        <label>2</label>
    </ligand>
</feature>
<feature type="binding site" evidence="1">
    <location>
        <position position="224"/>
    </location>
    <ligand>
        <name>Mg(2+)</name>
        <dbReference type="ChEBI" id="CHEBI:18420"/>
        <label>2</label>
    </ligand>
</feature>
<feature type="binding site" evidence="1">
    <location>
        <position position="225"/>
    </location>
    <ligand>
        <name>Mg(2+)</name>
        <dbReference type="ChEBI" id="CHEBI:18420"/>
        <label>1</label>
    </ligand>
</feature>
<feature type="binding site" evidence="1">
    <location>
        <position position="225"/>
    </location>
    <ligand>
        <name>Mg(2+)</name>
        <dbReference type="ChEBI" id="CHEBI:18420"/>
        <label>2</label>
    </ligand>
</feature>
<protein>
    <recommendedName>
        <fullName evidence="1">Anthranilate phosphoribosyltransferase</fullName>
        <ecNumber evidence="1">2.4.2.18</ecNumber>
    </recommendedName>
</protein>
<name>TRPD_GEOKA</name>
<evidence type="ECO:0000255" key="1">
    <source>
        <dbReference type="HAMAP-Rule" id="MF_00211"/>
    </source>
</evidence>
<organism>
    <name type="scientific">Geobacillus kaustophilus (strain HTA426)</name>
    <dbReference type="NCBI Taxonomy" id="235909"/>
    <lineage>
        <taxon>Bacteria</taxon>
        <taxon>Bacillati</taxon>
        <taxon>Bacillota</taxon>
        <taxon>Bacilli</taxon>
        <taxon>Bacillales</taxon>
        <taxon>Anoxybacillaceae</taxon>
        <taxon>Geobacillus</taxon>
        <taxon>Geobacillus thermoleovorans group</taxon>
    </lineage>
</organism>
<proteinExistence type="inferred from homology"/>
<accession>Q5KXU8</accession>
<comment type="function">
    <text evidence="1">Catalyzes the transfer of the phosphoribosyl group of 5-phosphorylribose-1-pyrophosphate (PRPP) to anthranilate to yield N-(5'-phosphoribosyl)-anthranilate (PRA).</text>
</comment>
<comment type="catalytic activity">
    <reaction evidence="1">
        <text>N-(5-phospho-beta-D-ribosyl)anthranilate + diphosphate = 5-phospho-alpha-D-ribose 1-diphosphate + anthranilate</text>
        <dbReference type="Rhea" id="RHEA:11768"/>
        <dbReference type="ChEBI" id="CHEBI:16567"/>
        <dbReference type="ChEBI" id="CHEBI:18277"/>
        <dbReference type="ChEBI" id="CHEBI:33019"/>
        <dbReference type="ChEBI" id="CHEBI:58017"/>
        <dbReference type="EC" id="2.4.2.18"/>
    </reaction>
</comment>
<comment type="cofactor">
    <cofactor evidence="1">
        <name>Mg(2+)</name>
        <dbReference type="ChEBI" id="CHEBI:18420"/>
    </cofactor>
    <text evidence="1">Binds 2 magnesium ions per monomer.</text>
</comment>
<comment type="pathway">
    <text evidence="1">Amino-acid biosynthesis; L-tryptophan biosynthesis; L-tryptophan from chorismate: step 2/5.</text>
</comment>
<comment type="subunit">
    <text evidence="1">Homodimer.</text>
</comment>
<comment type="similarity">
    <text evidence="1">Belongs to the anthranilate phosphoribosyltransferase family.</text>
</comment>